<gene>
    <name evidence="1" type="primary">nuoB</name>
    <name type="ordered locus">FRAAL1033</name>
</gene>
<reference key="1">
    <citation type="journal article" date="2007" name="Genome Res.">
        <title>Genome characteristics of facultatively symbiotic Frankia sp. strains reflect host range and host plant biogeography.</title>
        <authorList>
            <person name="Normand P."/>
            <person name="Lapierre P."/>
            <person name="Tisa L.S."/>
            <person name="Gogarten J.P."/>
            <person name="Alloisio N."/>
            <person name="Bagnarol E."/>
            <person name="Bassi C.A."/>
            <person name="Berry A.M."/>
            <person name="Bickhart D.M."/>
            <person name="Choisne N."/>
            <person name="Couloux A."/>
            <person name="Cournoyer B."/>
            <person name="Cruveiller S."/>
            <person name="Daubin V."/>
            <person name="Demange N."/>
            <person name="Francino M.P."/>
            <person name="Goltsman E."/>
            <person name="Huang Y."/>
            <person name="Kopp O.R."/>
            <person name="Labarre L."/>
            <person name="Lapidus A."/>
            <person name="Lavire C."/>
            <person name="Marechal J."/>
            <person name="Martinez M."/>
            <person name="Mastronunzio J.E."/>
            <person name="Mullin B.C."/>
            <person name="Niemann J."/>
            <person name="Pujic P."/>
            <person name="Rawnsley T."/>
            <person name="Rouy Z."/>
            <person name="Schenowitz C."/>
            <person name="Sellstedt A."/>
            <person name="Tavares F."/>
            <person name="Tomkins J.P."/>
            <person name="Vallenet D."/>
            <person name="Valverde C."/>
            <person name="Wall L.G."/>
            <person name="Wang Y."/>
            <person name="Medigue C."/>
            <person name="Benson D.R."/>
        </authorList>
    </citation>
    <scope>NUCLEOTIDE SEQUENCE [LARGE SCALE GENOMIC DNA]</scope>
    <source>
        <strain>DSM 45986 / CECT 9034 / ACN14a</strain>
    </source>
</reference>
<keyword id="KW-0004">4Fe-4S</keyword>
<keyword id="KW-1003">Cell membrane</keyword>
<keyword id="KW-0408">Iron</keyword>
<keyword id="KW-0411">Iron-sulfur</keyword>
<keyword id="KW-0472">Membrane</keyword>
<keyword id="KW-0479">Metal-binding</keyword>
<keyword id="KW-0520">NAD</keyword>
<keyword id="KW-0874">Quinone</keyword>
<keyword id="KW-1185">Reference proteome</keyword>
<keyword id="KW-1278">Translocase</keyword>
<keyword id="KW-0813">Transport</keyword>
<dbReference type="EC" id="7.1.1.-" evidence="1"/>
<dbReference type="EMBL" id="CT573213">
    <property type="protein sequence ID" value="CAJ59698.1"/>
    <property type="status" value="ALT_INIT"/>
    <property type="molecule type" value="Genomic_DNA"/>
</dbReference>
<dbReference type="RefSeq" id="WP_041938840.1">
    <property type="nucleotide sequence ID" value="NC_008278.1"/>
</dbReference>
<dbReference type="SMR" id="Q0RRW7"/>
<dbReference type="STRING" id="326424.FRAAL1033"/>
<dbReference type="KEGG" id="fal:FRAAL1033"/>
<dbReference type="eggNOG" id="COG0377">
    <property type="taxonomic scope" value="Bacteria"/>
</dbReference>
<dbReference type="HOGENOM" id="CLU_083855_0_0_11"/>
<dbReference type="OrthoDB" id="9786737at2"/>
<dbReference type="Proteomes" id="UP000000657">
    <property type="component" value="Chromosome"/>
</dbReference>
<dbReference type="GO" id="GO:0005886">
    <property type="term" value="C:plasma membrane"/>
    <property type="evidence" value="ECO:0007669"/>
    <property type="project" value="UniProtKB-SubCell"/>
</dbReference>
<dbReference type="GO" id="GO:0045271">
    <property type="term" value="C:respiratory chain complex I"/>
    <property type="evidence" value="ECO:0007669"/>
    <property type="project" value="TreeGrafter"/>
</dbReference>
<dbReference type="GO" id="GO:0051539">
    <property type="term" value="F:4 iron, 4 sulfur cluster binding"/>
    <property type="evidence" value="ECO:0007669"/>
    <property type="project" value="UniProtKB-KW"/>
</dbReference>
<dbReference type="GO" id="GO:0005506">
    <property type="term" value="F:iron ion binding"/>
    <property type="evidence" value="ECO:0007669"/>
    <property type="project" value="UniProtKB-UniRule"/>
</dbReference>
<dbReference type="GO" id="GO:0008137">
    <property type="term" value="F:NADH dehydrogenase (ubiquinone) activity"/>
    <property type="evidence" value="ECO:0007669"/>
    <property type="project" value="InterPro"/>
</dbReference>
<dbReference type="GO" id="GO:0050136">
    <property type="term" value="F:NADH:ubiquinone reductase (non-electrogenic) activity"/>
    <property type="evidence" value="ECO:0007669"/>
    <property type="project" value="UniProtKB-UniRule"/>
</dbReference>
<dbReference type="GO" id="GO:0048038">
    <property type="term" value="F:quinone binding"/>
    <property type="evidence" value="ECO:0007669"/>
    <property type="project" value="UniProtKB-KW"/>
</dbReference>
<dbReference type="GO" id="GO:0009060">
    <property type="term" value="P:aerobic respiration"/>
    <property type="evidence" value="ECO:0007669"/>
    <property type="project" value="TreeGrafter"/>
</dbReference>
<dbReference type="GO" id="GO:0015990">
    <property type="term" value="P:electron transport coupled proton transport"/>
    <property type="evidence" value="ECO:0007669"/>
    <property type="project" value="TreeGrafter"/>
</dbReference>
<dbReference type="FunFam" id="3.40.50.12280:FF:000004">
    <property type="entry name" value="NADH-quinone oxidoreductase subunit B"/>
    <property type="match status" value="1"/>
</dbReference>
<dbReference type="Gene3D" id="3.40.50.12280">
    <property type="match status" value="1"/>
</dbReference>
<dbReference type="HAMAP" id="MF_01356">
    <property type="entry name" value="NDH1_NuoB"/>
    <property type="match status" value="1"/>
</dbReference>
<dbReference type="InterPro" id="IPR006137">
    <property type="entry name" value="NADH_UbQ_OxRdtase-like_20kDa"/>
</dbReference>
<dbReference type="InterPro" id="IPR006138">
    <property type="entry name" value="NADH_UQ_OxRdtase_20Kd_su"/>
</dbReference>
<dbReference type="NCBIfam" id="TIGR01957">
    <property type="entry name" value="nuoB_fam"/>
    <property type="match status" value="1"/>
</dbReference>
<dbReference type="NCBIfam" id="NF005012">
    <property type="entry name" value="PRK06411.1"/>
    <property type="match status" value="1"/>
</dbReference>
<dbReference type="PANTHER" id="PTHR11995">
    <property type="entry name" value="NADH DEHYDROGENASE"/>
    <property type="match status" value="1"/>
</dbReference>
<dbReference type="PANTHER" id="PTHR11995:SF14">
    <property type="entry name" value="NADH DEHYDROGENASE [UBIQUINONE] IRON-SULFUR PROTEIN 7, MITOCHONDRIAL"/>
    <property type="match status" value="1"/>
</dbReference>
<dbReference type="Pfam" id="PF01058">
    <property type="entry name" value="Oxidored_q6"/>
    <property type="match status" value="1"/>
</dbReference>
<dbReference type="SUPFAM" id="SSF56770">
    <property type="entry name" value="HydA/Nqo6-like"/>
    <property type="match status" value="1"/>
</dbReference>
<dbReference type="PROSITE" id="PS01150">
    <property type="entry name" value="COMPLEX1_20K"/>
    <property type="match status" value="1"/>
</dbReference>
<evidence type="ECO:0000255" key="1">
    <source>
        <dbReference type="HAMAP-Rule" id="MF_01356"/>
    </source>
</evidence>
<evidence type="ECO:0000256" key="2">
    <source>
        <dbReference type="SAM" id="MobiDB-lite"/>
    </source>
</evidence>
<evidence type="ECO:0000305" key="3"/>
<sequence length="281" mass="29731">MGLEEKLPGGVLLASVEKLANWSRRSSLWPATFGLACCAIEMMSTGAGRYDLSRFGMEVFRASPRQADLMIVAGRVSQKMAPVLRQIYDQMPEPKWVLSMGVCASSGGMFNNYAIVQGVDHIVPVDMYLPGCPPRPEMLMDAIIKLHEKILAGPVTGRTAHTESGSSPYPKPIDVATARAGLPAGELDTRTLSVNDRKRFRIPAGAPVPTGRGAVEPVLDTRRPAAIAPPSVFGRAKGIPVDAKPLDESRAHGPGPTTADIADAADTADSDAAPGATHDTP</sequence>
<name>NUOB_FRAAA</name>
<organism>
    <name type="scientific">Frankia alni (strain DSM 45986 / CECT 9034 / ACN14a)</name>
    <dbReference type="NCBI Taxonomy" id="326424"/>
    <lineage>
        <taxon>Bacteria</taxon>
        <taxon>Bacillati</taxon>
        <taxon>Actinomycetota</taxon>
        <taxon>Actinomycetes</taxon>
        <taxon>Frankiales</taxon>
        <taxon>Frankiaceae</taxon>
        <taxon>Frankia</taxon>
    </lineage>
</organism>
<comment type="function">
    <text evidence="1">NDH-1 shuttles electrons from NADH, via FMN and iron-sulfur (Fe-S) centers, to quinones in the respiratory chain. The immediate electron acceptor for the enzyme in this species is believed to be a menaquinone. Couples the redox reaction to proton translocation (for every two electrons transferred, four hydrogen ions are translocated across the cytoplasmic membrane), and thus conserves the redox energy in a proton gradient.</text>
</comment>
<comment type="catalytic activity">
    <reaction evidence="1">
        <text>a quinone + NADH + 5 H(+)(in) = a quinol + NAD(+) + 4 H(+)(out)</text>
        <dbReference type="Rhea" id="RHEA:57888"/>
        <dbReference type="ChEBI" id="CHEBI:15378"/>
        <dbReference type="ChEBI" id="CHEBI:24646"/>
        <dbReference type="ChEBI" id="CHEBI:57540"/>
        <dbReference type="ChEBI" id="CHEBI:57945"/>
        <dbReference type="ChEBI" id="CHEBI:132124"/>
    </reaction>
</comment>
<comment type="cofactor">
    <cofactor evidence="1">
        <name>[4Fe-4S] cluster</name>
        <dbReference type="ChEBI" id="CHEBI:49883"/>
    </cofactor>
    <text evidence="1">Binds 1 [4Fe-4S] cluster.</text>
</comment>
<comment type="subunit">
    <text evidence="1">NDH-1 is composed of 14 different subunits. Subunits NuoB, C, D, E, F, and G constitute the peripheral sector of the complex.</text>
</comment>
<comment type="subcellular location">
    <subcellularLocation>
        <location evidence="1">Cell membrane</location>
        <topology evidence="1">Peripheral membrane protein</topology>
        <orientation evidence="1">Cytoplasmic side</orientation>
    </subcellularLocation>
</comment>
<comment type="similarity">
    <text evidence="1">Belongs to the complex I 20 kDa subunit family.</text>
</comment>
<comment type="sequence caution" evidence="3">
    <conflict type="erroneous initiation">
        <sequence resource="EMBL-CDS" id="CAJ59698"/>
    </conflict>
</comment>
<accession>Q0RRW7</accession>
<feature type="chain" id="PRO_0000376233" description="NADH-quinone oxidoreductase subunit B">
    <location>
        <begin position="1"/>
        <end position="281"/>
    </location>
</feature>
<feature type="region of interest" description="Disordered" evidence="2">
    <location>
        <begin position="242"/>
        <end position="281"/>
    </location>
</feature>
<feature type="compositionally biased region" description="Low complexity" evidence="2">
    <location>
        <begin position="257"/>
        <end position="281"/>
    </location>
</feature>
<feature type="binding site" evidence="1">
    <location>
        <position position="37"/>
    </location>
    <ligand>
        <name>[4Fe-4S] cluster</name>
        <dbReference type="ChEBI" id="CHEBI:49883"/>
    </ligand>
</feature>
<feature type="binding site" evidence="1">
    <location>
        <position position="38"/>
    </location>
    <ligand>
        <name>[4Fe-4S] cluster</name>
        <dbReference type="ChEBI" id="CHEBI:49883"/>
    </ligand>
</feature>
<feature type="binding site" evidence="1">
    <location>
        <position position="103"/>
    </location>
    <ligand>
        <name>[4Fe-4S] cluster</name>
        <dbReference type="ChEBI" id="CHEBI:49883"/>
    </ligand>
</feature>
<feature type="binding site" evidence="1">
    <location>
        <position position="132"/>
    </location>
    <ligand>
        <name>[4Fe-4S] cluster</name>
        <dbReference type="ChEBI" id="CHEBI:49883"/>
    </ligand>
</feature>
<proteinExistence type="inferred from homology"/>
<protein>
    <recommendedName>
        <fullName evidence="1">NADH-quinone oxidoreductase subunit B</fullName>
        <ecNumber evidence="1">7.1.1.-</ecNumber>
    </recommendedName>
    <alternativeName>
        <fullName evidence="1">NADH dehydrogenase I subunit B</fullName>
    </alternativeName>
    <alternativeName>
        <fullName evidence="1">NDH-1 subunit B</fullName>
    </alternativeName>
</protein>